<keyword id="KW-0963">Cytoplasm</keyword>
<keyword id="KW-0597">Phosphoprotein</keyword>
<keyword id="KW-1185">Reference proteome</keyword>
<comment type="subunit">
    <text evidence="5">Interacts with NAP1 (via the central domain consisting of amino acids 143 to 362). Copurifies with ribosomes.</text>
</comment>
<comment type="interaction">
    <interactant intactId="EBI-36841">
        <id>Q08229</id>
    </interactant>
    <interactant intactId="EBI-29423">
        <id>Q99299</id>
        <label>AIM44</label>
    </interactant>
    <organismsDiffer>false</organismsDiffer>
    <experiments>6</experiments>
</comment>
<comment type="interaction">
    <interactant intactId="EBI-36841">
        <id>Q08229</id>
    </interactant>
    <interactant intactId="EBI-3508">
        <id>P29366</id>
        <label>BEM1</label>
    </interactant>
    <organismsDiffer>false</organismsDiffer>
    <experiments>6</experiments>
</comment>
<comment type="interaction">
    <interactant intactId="EBI-36841">
        <id>Q08229</id>
    </interactant>
    <interactant intactId="EBI-3719">
        <id>P38041</id>
        <label>BOI1</label>
    </interactant>
    <organismsDiffer>false</organismsDiffer>
    <experiments>4</experiments>
</comment>
<comment type="interaction">
    <interactant intactId="EBI-36841">
        <id>Q08229</id>
    </interactant>
    <interactant intactId="EBI-4220">
        <id>P11433</id>
        <label>CDC24</label>
    </interactant>
    <organismsDiffer>false</organismsDiffer>
    <experiments>6</experiments>
</comment>
<comment type="interaction">
    <interactant intactId="EBI-36841">
        <id>Q08229</id>
    </interactant>
    <interactant intactId="EBI-28760">
        <id>P53939</id>
        <label>NIS1</label>
    </interactant>
    <organismsDiffer>false</organismsDiffer>
    <experiments>4</experiments>
</comment>
<comment type="interaction">
    <interactant intactId="EBI-36841">
        <id>Q08229</id>
    </interactant>
    <interactant intactId="EBI-24460">
        <id>P32793</id>
        <label>YSC84</label>
    </interactant>
    <organismsDiffer>false</organismsDiffer>
    <experiments>2</experiments>
</comment>
<comment type="subcellular location">
    <subcellularLocation>
        <location evidence="5">Bud neck</location>
    </subcellularLocation>
    <subcellularLocation>
        <location evidence="2">Cytoplasm</location>
    </subcellularLocation>
    <text evidence="5">Assembles at the inner surface of the cell membrane. Localizes to the septin cortex prior to bud emergence and to actin cap in unbudded cells.</text>
</comment>
<comment type="PTM">
    <text evidence="4">Phosphorylated by CDC28.</text>
</comment>
<comment type="miscellaneous">
    <text evidence="3">Present with 6490 molecules/cell in log phase SD medium.</text>
</comment>
<name>NBA1_YEAST</name>
<reference key="1">
    <citation type="journal article" date="1997" name="Nature">
        <title>The nucleotide sequence of Saccharomyces cerevisiae chromosome XV.</title>
        <authorList>
            <person name="Dujon B."/>
            <person name="Albermann K."/>
            <person name="Aldea M."/>
            <person name="Alexandraki D."/>
            <person name="Ansorge W."/>
            <person name="Arino J."/>
            <person name="Benes V."/>
            <person name="Bohn C."/>
            <person name="Bolotin-Fukuhara M."/>
            <person name="Bordonne R."/>
            <person name="Boyer J."/>
            <person name="Camasses A."/>
            <person name="Casamayor A."/>
            <person name="Casas C."/>
            <person name="Cheret G."/>
            <person name="Cziepluch C."/>
            <person name="Daignan-Fornier B."/>
            <person name="Dang V.-D."/>
            <person name="de Haan M."/>
            <person name="Delius H."/>
            <person name="Durand P."/>
            <person name="Fairhead C."/>
            <person name="Feldmann H."/>
            <person name="Gaillon L."/>
            <person name="Galisson F."/>
            <person name="Gamo F.-J."/>
            <person name="Gancedo C."/>
            <person name="Goffeau A."/>
            <person name="Goulding S.E."/>
            <person name="Grivell L.A."/>
            <person name="Habbig B."/>
            <person name="Hand N.J."/>
            <person name="Hani J."/>
            <person name="Hattenhorst U."/>
            <person name="Hebling U."/>
            <person name="Hernando Y."/>
            <person name="Herrero E."/>
            <person name="Heumann K."/>
            <person name="Hiesel R."/>
            <person name="Hilger F."/>
            <person name="Hofmann B."/>
            <person name="Hollenberg C.P."/>
            <person name="Hughes B."/>
            <person name="Jauniaux J.-C."/>
            <person name="Kalogeropoulos A."/>
            <person name="Katsoulou C."/>
            <person name="Kordes E."/>
            <person name="Lafuente M.J."/>
            <person name="Landt O."/>
            <person name="Louis E.J."/>
            <person name="Maarse A.C."/>
            <person name="Madania A."/>
            <person name="Mannhaupt G."/>
            <person name="Marck C."/>
            <person name="Martin R.P."/>
            <person name="Mewes H.-W."/>
            <person name="Michaux G."/>
            <person name="Paces V."/>
            <person name="Parle-McDermott A.G."/>
            <person name="Pearson B.M."/>
            <person name="Perrin A."/>
            <person name="Pettersson B."/>
            <person name="Poch O."/>
            <person name="Pohl T.M."/>
            <person name="Poirey R."/>
            <person name="Portetelle D."/>
            <person name="Pujol A."/>
            <person name="Purnelle B."/>
            <person name="Ramezani Rad M."/>
            <person name="Rechmann S."/>
            <person name="Schwager C."/>
            <person name="Schweizer M."/>
            <person name="Sor F."/>
            <person name="Sterky F."/>
            <person name="Tarassov I.A."/>
            <person name="Teodoru C."/>
            <person name="Tettelin H."/>
            <person name="Thierry A."/>
            <person name="Tobiasch E."/>
            <person name="Tzermia M."/>
            <person name="Uhlen M."/>
            <person name="Unseld M."/>
            <person name="Valens M."/>
            <person name="Vandenbol M."/>
            <person name="Vetter I."/>
            <person name="Vlcek C."/>
            <person name="Voet M."/>
            <person name="Volckaert G."/>
            <person name="Voss H."/>
            <person name="Wambutt R."/>
            <person name="Wedler H."/>
            <person name="Wiemann S."/>
            <person name="Winsor B."/>
            <person name="Wolfe K.H."/>
            <person name="Zollner A."/>
            <person name="Zumstein E."/>
            <person name="Kleine K."/>
        </authorList>
    </citation>
    <scope>NUCLEOTIDE SEQUENCE [LARGE SCALE GENOMIC DNA]</scope>
    <source>
        <strain>ATCC 204508 / S288c</strain>
    </source>
</reference>
<reference key="2">
    <citation type="journal article" date="2014" name="G3 (Bethesda)">
        <title>The reference genome sequence of Saccharomyces cerevisiae: Then and now.</title>
        <authorList>
            <person name="Engel S.R."/>
            <person name="Dietrich F.S."/>
            <person name="Fisk D.G."/>
            <person name="Binkley G."/>
            <person name="Balakrishnan R."/>
            <person name="Costanzo M.C."/>
            <person name="Dwight S.S."/>
            <person name="Hitz B.C."/>
            <person name="Karra K."/>
            <person name="Nash R.S."/>
            <person name="Weng S."/>
            <person name="Wong E.D."/>
            <person name="Lloyd P."/>
            <person name="Skrzypek M.S."/>
            <person name="Miyasato S.R."/>
            <person name="Simison M."/>
            <person name="Cherry J.M."/>
        </authorList>
    </citation>
    <scope>GENOME REANNOTATION</scope>
    <source>
        <strain>ATCC 204508 / S288c</strain>
    </source>
</reference>
<reference key="3">
    <citation type="journal article" date="2003" name="Nature">
        <title>Global analysis of protein localization in budding yeast.</title>
        <authorList>
            <person name="Huh W.-K."/>
            <person name="Falvo J.V."/>
            <person name="Gerke L.C."/>
            <person name="Carroll A.S."/>
            <person name="Howson R.W."/>
            <person name="Weissman J.S."/>
            <person name="O'Shea E.K."/>
        </authorList>
    </citation>
    <scope>SUBCELLULAR LOCATION [LARGE SCALE ANALYSIS]</scope>
</reference>
<reference key="4">
    <citation type="journal article" date="2003" name="Nature">
        <title>Global analysis of protein expression in yeast.</title>
        <authorList>
            <person name="Ghaemmaghami S."/>
            <person name="Huh W.-K."/>
            <person name="Bower K."/>
            <person name="Howson R.W."/>
            <person name="Belle A."/>
            <person name="Dephoure N."/>
            <person name="O'Shea E.K."/>
            <person name="Weissman J.S."/>
        </authorList>
    </citation>
    <scope>LEVEL OF PROTEIN EXPRESSION [LARGE SCALE ANALYSIS]</scope>
</reference>
<reference key="5">
    <citation type="journal article" date="2003" name="Nature">
        <title>Targets of the cyclin-dependent kinase Cdk1.</title>
        <authorList>
            <person name="Ubersax J.A."/>
            <person name="Woodbury E.L."/>
            <person name="Quang P.N."/>
            <person name="Paraz M."/>
            <person name="Blethrow J.D."/>
            <person name="Shah K."/>
            <person name="Shokat K.M."/>
            <person name="Morgan D.O."/>
        </authorList>
    </citation>
    <scope>PHOSPHORYLATION BY CDC28</scope>
</reference>
<reference key="6">
    <citation type="journal article" date="2006" name="Genes Dev.">
        <title>Systematic identification and functional screens of uncharacterized proteins associated with eukaryotic ribosomal complexes.</title>
        <authorList>
            <person name="Fleischer T.C."/>
            <person name="Weaver C.M."/>
            <person name="McAfee K.J."/>
            <person name="Jennings J.L."/>
            <person name="Link A.J."/>
        </authorList>
    </citation>
    <scope>IDENTIFICATION BY MASS SPECTROMETRY</scope>
    <scope>COPURIFICATION WITH RIBOSOMES</scope>
</reference>
<reference key="7">
    <citation type="journal article" date="2008" name="Mol. Cell. Biol.">
        <title>Phosphorylation by casein kinase 2 regulates Nap1 localization and function.</title>
        <authorList>
            <person name="Calvert M.E.K."/>
            <person name="Keck K.M."/>
            <person name="Ptak C."/>
            <person name="Shabanowitz J."/>
            <person name="Hunt D.F."/>
            <person name="Pemberton L.F."/>
        </authorList>
    </citation>
    <scope>IDENTIFICATION BY MASS SPECTROMETRY</scope>
    <scope>INTERACTION WITH NAP1</scope>
    <scope>SUBCELLULAR LOCATION</scope>
    <scope>REGION</scope>
</reference>
<reference key="8">
    <citation type="journal article" date="2009" name="Science">
        <title>Global analysis of Cdk1 substrate phosphorylation sites provides insights into evolution.</title>
        <authorList>
            <person name="Holt L.J."/>
            <person name="Tuch B.B."/>
            <person name="Villen J."/>
            <person name="Johnson A.D."/>
            <person name="Gygi S.P."/>
            <person name="Morgan D.O."/>
        </authorList>
    </citation>
    <scope>PHOSPHORYLATION [LARGE SCALE ANALYSIS] AT SER-138; SER-208 AND THR-403</scope>
    <scope>IDENTIFICATION BY MASS SPECTROMETRY [LARGE SCALE ANALYSIS]</scope>
</reference>
<dbReference type="EMBL" id="Z74812">
    <property type="protein sequence ID" value="CAA99080.1"/>
    <property type="molecule type" value="Genomic_DNA"/>
</dbReference>
<dbReference type="EMBL" id="BK006948">
    <property type="protein sequence ID" value="DAA10713.1"/>
    <property type="molecule type" value="Genomic_DNA"/>
</dbReference>
<dbReference type="PIR" id="S66763">
    <property type="entry name" value="S66763"/>
</dbReference>
<dbReference type="RefSeq" id="NP_014571.1">
    <property type="nucleotide sequence ID" value="NM_001183325.1"/>
</dbReference>
<dbReference type="BioGRID" id="34331">
    <property type="interactions" value="139"/>
</dbReference>
<dbReference type="DIP" id="DIP-1680N"/>
<dbReference type="FunCoup" id="Q08229">
    <property type="interactions" value="125"/>
</dbReference>
<dbReference type="IntAct" id="Q08229">
    <property type="interactions" value="18"/>
</dbReference>
<dbReference type="MINT" id="Q08229"/>
<dbReference type="STRING" id="4932.YOL070C"/>
<dbReference type="GlyGen" id="Q08229">
    <property type="glycosylation" value="1 site"/>
</dbReference>
<dbReference type="iPTMnet" id="Q08229"/>
<dbReference type="PaxDb" id="4932-YOL070C"/>
<dbReference type="PeptideAtlas" id="Q08229"/>
<dbReference type="TopDownProteomics" id="Q08229"/>
<dbReference type="EnsemblFungi" id="YOL070C_mRNA">
    <property type="protein sequence ID" value="YOL070C"/>
    <property type="gene ID" value="YOL070C"/>
</dbReference>
<dbReference type="GeneID" id="854084"/>
<dbReference type="KEGG" id="sce:YOL070C"/>
<dbReference type="AGR" id="SGD:S000005431"/>
<dbReference type="SGD" id="S000005431">
    <property type="gene designation" value="NBA1"/>
</dbReference>
<dbReference type="VEuPathDB" id="FungiDB:YOL070C"/>
<dbReference type="eggNOG" id="ENOG502R6DJ">
    <property type="taxonomic scope" value="Eukaryota"/>
</dbReference>
<dbReference type="HOGENOM" id="CLU_544174_0_0_1"/>
<dbReference type="InParanoid" id="Q08229"/>
<dbReference type="OMA" id="PGGHYKN"/>
<dbReference type="OrthoDB" id="4067583at2759"/>
<dbReference type="BioCyc" id="YEAST:G3O-33475-MONOMER"/>
<dbReference type="BioGRID-ORCS" id="854084">
    <property type="hits" value="0 hits in 10 CRISPR screens"/>
</dbReference>
<dbReference type="PRO" id="PR:Q08229"/>
<dbReference type="Proteomes" id="UP000002311">
    <property type="component" value="Chromosome XV"/>
</dbReference>
<dbReference type="RNAct" id="Q08229">
    <property type="molecule type" value="protein"/>
</dbReference>
<dbReference type="GO" id="GO:0032153">
    <property type="term" value="C:cell division site"/>
    <property type="evidence" value="ECO:0000314"/>
    <property type="project" value="SGD"/>
</dbReference>
<dbReference type="GO" id="GO:0005935">
    <property type="term" value="C:cellular bud neck"/>
    <property type="evidence" value="ECO:0000314"/>
    <property type="project" value="SGD"/>
</dbReference>
<dbReference type="GO" id="GO:0032174">
    <property type="term" value="C:cellular bud neck septin collar"/>
    <property type="evidence" value="ECO:0000314"/>
    <property type="project" value="SGD"/>
</dbReference>
<dbReference type="GO" id="GO:0032177">
    <property type="term" value="C:cellular bud neck split septin rings"/>
    <property type="evidence" value="ECO:0000314"/>
    <property type="project" value="SGD"/>
</dbReference>
<dbReference type="GO" id="GO:0005621">
    <property type="term" value="C:cellular bud scar"/>
    <property type="evidence" value="ECO:0000314"/>
    <property type="project" value="SGD"/>
</dbReference>
<dbReference type="GO" id="GO:0005737">
    <property type="term" value="C:cytoplasm"/>
    <property type="evidence" value="ECO:0000314"/>
    <property type="project" value="SGD"/>
</dbReference>
<dbReference type="GO" id="GO:0007120">
    <property type="term" value="P:axial cellular bud site selection"/>
    <property type="evidence" value="ECO:0000315"/>
    <property type="project" value="SGD"/>
</dbReference>
<dbReference type="GO" id="GO:0045184">
    <property type="term" value="P:establishment of protein localization"/>
    <property type="evidence" value="ECO:0000315"/>
    <property type="project" value="SGD"/>
</dbReference>
<dbReference type="GO" id="GO:1901900">
    <property type="term" value="P:regulation of protein localization to cell division site"/>
    <property type="evidence" value="ECO:0000315"/>
    <property type="project" value="SGD"/>
</dbReference>
<protein>
    <recommendedName>
        <fullName>Protein NBA1</fullName>
    </recommendedName>
    <alternativeName>
        <fullName>NAP1 and bud neck-associated protein 1</fullName>
    </alternativeName>
</protein>
<feature type="chain" id="PRO_0000235925" description="Protein NBA1">
    <location>
        <begin position="1"/>
        <end position="501"/>
    </location>
</feature>
<feature type="region of interest" description="Disordered" evidence="1">
    <location>
        <begin position="1"/>
        <end position="78"/>
    </location>
</feature>
<feature type="region of interest" description="Disordered" evidence="1">
    <location>
        <begin position="102"/>
        <end position="133"/>
    </location>
</feature>
<feature type="region of interest" description="Disordered" evidence="1">
    <location>
        <begin position="146"/>
        <end position="165"/>
    </location>
</feature>
<feature type="region of interest" description="Disordered" evidence="1">
    <location>
        <begin position="267"/>
        <end position="286"/>
    </location>
</feature>
<feature type="region of interest" description="Necessary for the normal cellular distribution and bud neck targeting">
    <location>
        <begin position="275"/>
        <end position="501"/>
    </location>
</feature>
<feature type="region of interest" description="Disordered" evidence="1">
    <location>
        <begin position="338"/>
        <end position="366"/>
    </location>
</feature>
<feature type="compositionally biased region" description="Polar residues" evidence="1">
    <location>
        <begin position="11"/>
        <end position="20"/>
    </location>
</feature>
<feature type="compositionally biased region" description="Basic and acidic residues" evidence="1">
    <location>
        <begin position="46"/>
        <end position="55"/>
    </location>
</feature>
<feature type="compositionally biased region" description="Polar residues" evidence="1">
    <location>
        <begin position="148"/>
        <end position="158"/>
    </location>
</feature>
<feature type="modified residue" description="Phosphoserine" evidence="6">
    <location>
        <position position="138"/>
    </location>
</feature>
<feature type="modified residue" description="Phosphoserine" evidence="6">
    <location>
        <position position="208"/>
    </location>
</feature>
<feature type="modified residue" description="Phosphothreonine" evidence="6">
    <location>
        <position position="403"/>
    </location>
</feature>
<proteinExistence type="evidence at protein level"/>
<gene>
    <name type="primary">NBA1</name>
    <name type="ordered locus">YOL070C</name>
</gene>
<accession>Q08229</accession>
<accession>D6W1Z7</accession>
<sequence length="501" mass="55923">MSEEREENGISRATLNTQRLSAMIDSLNNEKDDRLFPSPTTTRTMITEEKADQSDVFKPPSRLLRSPAGDVSLPPGDNRSSMISNYSGIIQEGVEVSYVVKNRQQTQERRTSKDSNSLYSLKEPVSKNELPSLPMLPSEATLTKHLSDNQSTKSNTNADEIVIKPVTNAKPVGRFNSNTSKKVEGRGSLKLLSSPLRQEKVMRSSIGSGNLASESGSSTYNTKFHQSIQEQLEEEEEGNVSDKLSIVSSVIPELYTTTNEAPKAINPIRSETNDYNPTIPPRSKDRPRSRLFIEEGDGEGDLLTEEILPTPVQPGGHYKNSSQISTVSEQKSESYYSAATSMPPEEETYLTRPLPSTPNEDSRVTSNLKRDDTLKAIHDRANHTSTSTNKQDDDMYEDIIEETPKKTKLKKDTKKKLNKKKSVKELRSFDIDTLNQLLSVTKGTLIGSEFAQLGMKIEEKRALERLVDSLSRLTADMVLDPDRYEEGLKRLDKATKALEGF</sequence>
<evidence type="ECO:0000256" key="1">
    <source>
        <dbReference type="SAM" id="MobiDB-lite"/>
    </source>
</evidence>
<evidence type="ECO:0000269" key="2">
    <source>
    </source>
</evidence>
<evidence type="ECO:0000269" key="3">
    <source>
    </source>
</evidence>
<evidence type="ECO:0000269" key="4">
    <source>
    </source>
</evidence>
<evidence type="ECO:0000269" key="5">
    <source>
    </source>
</evidence>
<evidence type="ECO:0007744" key="6">
    <source>
    </source>
</evidence>
<organism>
    <name type="scientific">Saccharomyces cerevisiae (strain ATCC 204508 / S288c)</name>
    <name type="common">Baker's yeast</name>
    <dbReference type="NCBI Taxonomy" id="559292"/>
    <lineage>
        <taxon>Eukaryota</taxon>
        <taxon>Fungi</taxon>
        <taxon>Dikarya</taxon>
        <taxon>Ascomycota</taxon>
        <taxon>Saccharomycotina</taxon>
        <taxon>Saccharomycetes</taxon>
        <taxon>Saccharomycetales</taxon>
        <taxon>Saccharomycetaceae</taxon>
        <taxon>Saccharomyces</taxon>
    </lineage>
</organism>